<keyword id="KW-0002">3D-structure</keyword>
<keyword id="KW-0903">Direct protein sequencing</keyword>
<keyword id="KW-1035">Host cytoplasm</keyword>
<keyword id="KW-1048">Host nucleus</keyword>
<keyword id="KW-0433">Leucine-rich repeat</keyword>
<keyword id="KW-0614">Plasmid</keyword>
<keyword id="KW-1185">Reference proteome</keyword>
<keyword id="KW-0677">Repeat</keyword>
<keyword id="KW-0964">Secreted</keyword>
<keyword id="KW-0808">Transferase</keyword>
<keyword id="KW-0832">Ubl conjugation</keyword>
<keyword id="KW-0833">Ubl conjugation pathway</keyword>
<keyword id="KW-0843">Virulence</keyword>
<sequence>MLPINNNFSLPQNSFYNTISGTYADYFSAWDKWEKQALPGEERDEAVSRLKECLINNSDELRLDRLNLSSLPDNLPAQITLLNVSYNQLTNLPELPVTLKKLYSASNKLSELPVLPPALESLQVQHNELENLPALPDSLLTMNISYNEIVSLPSLPQALKNLRATRNFLTELPAFSEGNNPVVREYFFDRNQISHIPESILNLRNECSIHISDNPLSSHALPALQRLTSSPDYHGPRIYFSMSDGQQNTLHRPLADAVTAWFPENKQSDVSQIWHAFEHEEHANTFSAFLDRLSDTVSARNTSGFREQVAAWLEKLSASAELRQQSFAVAADATESCEDRVALTWNNLRKTLLVHQASEGLFDNDTGALLSLGREMFRLEILEDIARDKVRTLHFVDEIEVYLAFQTMLAEKLQLSTAVKEMRFYGVSGVTANDLRTAEAMVRSREENEFTDWFSLWGPWHAVLKRTEADRWAQAEEQKYEMLENEYPQRVADRLKASGLSGDADAEREAGAQVMRETEQQIYRQLTDEVLALRLPENGSQLHHS</sequence>
<dbReference type="EC" id="2.3.2.27" evidence="6 7 14 15"/>
<dbReference type="EMBL" id="AF047365">
    <property type="protein sequence ID" value="AAC23714.1"/>
    <property type="molecule type" value="Genomic_DNA"/>
</dbReference>
<dbReference type="EMBL" id="AL391753">
    <property type="protein sequence ID" value="CAC05853.1"/>
    <property type="molecule type" value="Genomic_DNA"/>
</dbReference>
<dbReference type="EMBL" id="AF348706">
    <property type="protein sequence ID" value="AAK18544.1"/>
    <property type="status" value="ALT_INIT"/>
    <property type="molecule type" value="Genomic_DNA"/>
</dbReference>
<dbReference type="EMBL" id="AY206445">
    <property type="protein sequence ID" value="AAP79029.1"/>
    <property type="molecule type" value="Genomic_DNA"/>
</dbReference>
<dbReference type="EMBL" id="AY879342">
    <property type="protein sequence ID" value="AAW64849.1"/>
    <property type="status" value="ALT_INIT"/>
    <property type="molecule type" value="Genomic_DNA"/>
</dbReference>
<dbReference type="EMBL" id="AF386526">
    <property type="protein sequence ID" value="AAL72345.2"/>
    <property type="molecule type" value="Genomic_DNA"/>
</dbReference>
<dbReference type="RefSeq" id="NP_858359.2">
    <property type="nucleotide sequence ID" value="NC_004851.1"/>
</dbReference>
<dbReference type="RefSeq" id="YP_006960318.1">
    <property type="nucleotide sequence ID" value="NC_019197.1"/>
</dbReference>
<dbReference type="PDB" id="3L3P">
    <property type="method" value="X-ray"/>
    <property type="resolution" value="3.20 A"/>
    <property type="chains" value="A=254-545"/>
</dbReference>
<dbReference type="PDB" id="5B0N">
    <property type="method" value="X-ray"/>
    <property type="resolution" value="1.80 A"/>
    <property type="chains" value="A/B=22-244"/>
</dbReference>
<dbReference type="PDB" id="5B0T">
    <property type="method" value="X-ray"/>
    <property type="resolution" value="2.00 A"/>
    <property type="chains" value="A=22-244"/>
</dbReference>
<dbReference type="PDB" id="6K2D">
    <property type="method" value="X-ray"/>
    <property type="resolution" value="3.60 A"/>
    <property type="chains" value="B=22-252"/>
</dbReference>
<dbReference type="PDB" id="6LOJ">
    <property type="method" value="X-ray"/>
    <property type="resolution" value="3.72 A"/>
    <property type="chains" value="A=22-244"/>
</dbReference>
<dbReference type="PDB" id="6LOL">
    <property type="method" value="X-ray"/>
    <property type="resolution" value="2.75 A"/>
    <property type="chains" value="A=22-545"/>
</dbReference>
<dbReference type="PDBsum" id="3L3P"/>
<dbReference type="PDBsum" id="5B0N"/>
<dbReference type="PDBsum" id="5B0T"/>
<dbReference type="PDBsum" id="6K2D"/>
<dbReference type="PDBsum" id="6LOJ"/>
<dbReference type="PDBsum" id="6LOL"/>
<dbReference type="SMR" id="Q8VSC3"/>
<dbReference type="DIP" id="DIP-46341N"/>
<dbReference type="IntAct" id="Q8VSC3">
    <property type="interactions" value="3"/>
</dbReference>
<dbReference type="MINT" id="Q8VSC3"/>
<dbReference type="PaxDb" id="198214-CP0226"/>
<dbReference type="GeneID" id="1238048"/>
<dbReference type="KEGG" id="sfl:CP0226"/>
<dbReference type="PATRIC" id="fig|198214.7.peg.5483"/>
<dbReference type="HOGENOM" id="CLU_018533_2_0_6"/>
<dbReference type="UniPathway" id="UPA00143"/>
<dbReference type="EvolutionaryTrace" id="Q8VSC3"/>
<dbReference type="PRO" id="PR:Q8VSC3"/>
<dbReference type="Proteomes" id="UP000001006">
    <property type="component" value="Plasmid pCP301"/>
</dbReference>
<dbReference type="GO" id="GO:0005576">
    <property type="term" value="C:extracellular region"/>
    <property type="evidence" value="ECO:0000314"/>
    <property type="project" value="UniProtKB"/>
</dbReference>
<dbReference type="GO" id="GO:0044164">
    <property type="term" value="C:host cell cytosol"/>
    <property type="evidence" value="ECO:0000314"/>
    <property type="project" value="UniProtKB"/>
</dbReference>
<dbReference type="GO" id="GO:0042025">
    <property type="term" value="C:host cell nucleus"/>
    <property type="evidence" value="ECO:0000314"/>
    <property type="project" value="UniProtKB"/>
</dbReference>
<dbReference type="GO" id="GO:0042802">
    <property type="term" value="F:identical protein binding"/>
    <property type="evidence" value="ECO:0000353"/>
    <property type="project" value="IntAct"/>
</dbReference>
<dbReference type="GO" id="GO:0061630">
    <property type="term" value="F:ubiquitin protein ligase activity"/>
    <property type="evidence" value="ECO:0000314"/>
    <property type="project" value="UniProtKB"/>
</dbReference>
<dbReference type="GO" id="GO:0004842">
    <property type="term" value="F:ubiquitin-protein transferase activity"/>
    <property type="evidence" value="ECO:0000314"/>
    <property type="project" value="UniProtKB"/>
</dbReference>
<dbReference type="GO" id="GO:0043161">
    <property type="term" value="P:proteasome-mediated ubiquitin-dependent protein catabolic process"/>
    <property type="evidence" value="ECO:0000314"/>
    <property type="project" value="GO_Central"/>
</dbReference>
<dbReference type="GO" id="GO:0051865">
    <property type="term" value="P:protein autoubiquitination"/>
    <property type="evidence" value="ECO:0000314"/>
    <property type="project" value="CACAO"/>
</dbReference>
<dbReference type="GO" id="GO:0044314">
    <property type="term" value="P:protein K27-linked ubiquitination"/>
    <property type="evidence" value="ECO:0000314"/>
    <property type="project" value="UniProtKB"/>
</dbReference>
<dbReference type="GO" id="GO:0070936">
    <property type="term" value="P:protein K48-linked ubiquitination"/>
    <property type="evidence" value="ECO:0000314"/>
    <property type="project" value="UniProtKB"/>
</dbReference>
<dbReference type="GO" id="GO:0044414">
    <property type="term" value="P:symbiont-mediated suppression of host defenses"/>
    <property type="evidence" value="ECO:0000314"/>
    <property type="project" value="UniProt"/>
</dbReference>
<dbReference type="GO" id="GO:0052036">
    <property type="term" value="P:symbiont-mediated suppression of host inflammatory response"/>
    <property type="evidence" value="ECO:0000314"/>
    <property type="project" value="GO_Central"/>
</dbReference>
<dbReference type="GO" id="GO:0052170">
    <property type="term" value="P:symbiont-mediated suppression of host innate immune response"/>
    <property type="evidence" value="ECO:0000314"/>
    <property type="project" value="UniProtKB"/>
</dbReference>
<dbReference type="GO" id="GO:0085034">
    <property type="term" value="P:symbiont-mediated suppression of host NF-kappaB cascade"/>
    <property type="evidence" value="ECO:0000314"/>
    <property type="project" value="GO_Central"/>
</dbReference>
<dbReference type="GO" id="GO:0006511">
    <property type="term" value="P:ubiquitin-dependent protein catabolic process"/>
    <property type="evidence" value="ECO:0000314"/>
    <property type="project" value="UniProt"/>
</dbReference>
<dbReference type="FunFam" id="1.20.58.90:FF:000007">
    <property type="entry name" value="E3 ubiquitin-protein ligase ipaH9.8"/>
    <property type="match status" value="1"/>
</dbReference>
<dbReference type="FunFam" id="1.20.1270.130:FF:000001">
    <property type="entry name" value="Invasion plasmid antigen IpaH"/>
    <property type="match status" value="1"/>
</dbReference>
<dbReference type="FunFam" id="1.20.58.360:FF:000001">
    <property type="entry name" value="Probable E3 ubiquitin-protein ligase ipaH7.8"/>
    <property type="match status" value="1"/>
</dbReference>
<dbReference type="Gene3D" id="1.20.58.90">
    <property type="match status" value="1"/>
</dbReference>
<dbReference type="Gene3D" id="3.80.10.10">
    <property type="entry name" value="Ribonuclease Inhibitor"/>
    <property type="match status" value="1"/>
</dbReference>
<dbReference type="Gene3D" id="1.20.58.360">
    <property type="entry name" value="Shigella T3SS effector IpaH defines"/>
    <property type="match status" value="1"/>
</dbReference>
<dbReference type="Gene3D" id="1.20.1270.130">
    <property type="entry name" value="Shigella T3SS effector IpaH domain"/>
    <property type="match status" value="1"/>
</dbReference>
<dbReference type="InterPro" id="IPR051071">
    <property type="entry name" value="LRR-bact_E3_ubiq_ligases"/>
</dbReference>
<dbReference type="InterPro" id="IPR032675">
    <property type="entry name" value="LRR_dom_sf"/>
</dbReference>
<dbReference type="InterPro" id="IPR032674">
    <property type="entry name" value="LRR_E3_ligase_N"/>
</dbReference>
<dbReference type="InterPro" id="IPR029487">
    <property type="entry name" value="NEL_dom"/>
</dbReference>
<dbReference type="NCBIfam" id="NF046045">
    <property type="entry name" value="IpaH_Shig"/>
    <property type="match status" value="1"/>
</dbReference>
<dbReference type="PANTHER" id="PTHR47114">
    <property type="match status" value="1"/>
</dbReference>
<dbReference type="PANTHER" id="PTHR47114:SF2">
    <property type="entry name" value="OLIGODENDROCYTE-MYELIN GLYCOPROTEIN"/>
    <property type="match status" value="1"/>
</dbReference>
<dbReference type="Pfam" id="PF12468">
    <property type="entry name" value="LRR_TTSS"/>
    <property type="match status" value="1"/>
</dbReference>
<dbReference type="Pfam" id="PF14496">
    <property type="entry name" value="NEL"/>
    <property type="match status" value="1"/>
</dbReference>
<dbReference type="SMART" id="SM00364">
    <property type="entry name" value="LRR_BAC"/>
    <property type="match status" value="5"/>
</dbReference>
<dbReference type="SUPFAM" id="SSF52058">
    <property type="entry name" value="L domain-like"/>
    <property type="match status" value="1"/>
</dbReference>
<dbReference type="PROSITE" id="PS52053">
    <property type="entry name" value="NEL"/>
    <property type="match status" value="1"/>
</dbReference>
<gene>
    <name evidence="18" type="primary">ipaH9.8</name>
    <name type="ordered locus">CP0226</name>
    <name type="ORF">pWR501_0234</name>
    <name type="ORF">SFLP090</name>
</gene>
<geneLocation type="plasmid">
    <name>pCP301</name>
</geneLocation>
<geneLocation type="plasmid">
    <name>pWR100</name>
</geneLocation>
<geneLocation type="plasmid">
    <name>pWR501</name>
</geneLocation>
<geneLocation type="plasmid">
    <name>pINV_F6_M1382</name>
</geneLocation>
<geneLocation type="plasmid">
    <name>pSF5</name>
</geneLocation>
<feature type="chain" id="PRO_0000395755" description="E3 ubiquitin-protein ligase ipaH9.8">
    <location>
        <begin position="1"/>
        <end position="545"/>
    </location>
</feature>
<feature type="repeat" description="LRR 1">
    <location>
        <begin position="57"/>
        <end position="77"/>
    </location>
</feature>
<feature type="repeat" description="LRR 2">
    <location>
        <begin position="78"/>
        <end position="99"/>
    </location>
</feature>
<feature type="repeat" description="LRR 3">
    <location>
        <begin position="100"/>
        <end position="117"/>
    </location>
</feature>
<feature type="repeat" description="LRR 4">
    <location>
        <begin position="118"/>
        <end position="139"/>
    </location>
</feature>
<feature type="repeat" description="LRR 5">
    <location>
        <begin position="140"/>
        <end position="157"/>
    </location>
</feature>
<feature type="repeat" description="LRR 6">
    <location>
        <begin position="158"/>
        <end position="179"/>
    </location>
</feature>
<feature type="repeat" description="LRR 7">
    <location>
        <begin position="182"/>
        <end position="203"/>
    </location>
</feature>
<feature type="repeat" description="LRR 8">
    <location>
        <begin position="205"/>
        <end position="228"/>
    </location>
</feature>
<feature type="domain" description="NEL" evidence="2">
    <location>
        <begin position="253"/>
        <end position="545"/>
    </location>
</feature>
<feature type="region of interest" description="Interaction with target proteins" evidence="1">
    <location>
        <begin position="1"/>
        <end position="242"/>
    </location>
</feature>
<feature type="region of interest" description="Linker" evidence="1">
    <location>
        <begin position="243"/>
        <end position="250"/>
    </location>
</feature>
<feature type="region of interest" description="E3 ubiquitin-protein ligase catalytic domain" evidence="1">
    <location>
        <begin position="251"/>
        <end position="545"/>
    </location>
</feature>
<feature type="active site" description="Glycyl thioester intermediate" evidence="2 10 13">
    <location>
        <position position="337"/>
    </location>
</feature>
<feature type="site" description="Sensor for substrate-binding" evidence="15">
    <location>
        <position position="166"/>
    </location>
</feature>
<feature type="site" description="Sensor for substrate-binding" evidence="15">
    <location>
        <position position="187"/>
    </location>
</feature>
<feature type="sequence variant" description="In plasmid pWR100, plasmid pWR501, plasmid pSF5 and plasmid pINV_F6_M1382.">
    <original>P</original>
    <variation>Q</variation>
    <location>
        <position position="222"/>
    </location>
</feature>
<feature type="sequence variant" description="In plasmid pINV_F6_M1382.">
    <original>Q</original>
    <variation>L</variation>
    <location>
        <position position="474"/>
    </location>
</feature>
<feature type="sequence variant" description="In plasmid pWR100 and plasmid pWR501.">
    <original>P</original>
    <variation>F</variation>
    <location>
        <position position="536"/>
    </location>
</feature>
<feature type="sequence variant" description="In plasmid pSF5.">
    <original>P</original>
    <variation>S</variation>
    <location>
        <position position="536"/>
    </location>
</feature>
<feature type="mutagenesis site" description="Abolished ability to bind and ubiquitinate host GBP1; when associated with A-62 and A-83." evidence="13">
    <original>L</original>
    <variation>A</variation>
    <location>
        <position position="50"/>
    </location>
</feature>
<feature type="mutagenesis site" description="Abolished ability to bind and ubiquitinate host GBP1; when associated with A-50 and A-83." evidence="13">
    <original>R</original>
    <variation>A</variation>
    <location>
        <position position="62"/>
    </location>
</feature>
<feature type="mutagenesis site" description="Abolished ability to bind and ubiquitinate host GBP1; when associated with A-50 and A-62." evidence="13">
    <original>N</original>
    <variation>A</variation>
    <location>
        <position position="83"/>
    </location>
</feature>
<feature type="mutagenesis site" description="Decreased ability to ubiquitinate host GBP1." evidence="14">
    <original>YNQ</original>
    <variation>ANA</variation>
    <location>
        <begin position="86"/>
        <end position="88"/>
    </location>
</feature>
<feature type="mutagenesis site" description="Decreased ability to ubiquitinate host GBP1; when associated with A-146." evidence="14">
    <original>H</original>
    <variation>A</variation>
    <location>
        <position position="126"/>
    </location>
</feature>
<feature type="mutagenesis site" description="Decreased ability to ubiquitinate host GBP1; when associated with A-126 or A-190." evidence="14">
    <original>Y</original>
    <variation>A</variation>
    <location>
        <position position="146"/>
    </location>
</feature>
<feature type="mutagenesis site" description="Abolishes proteasomal degradation of host proteins; when associated with A-187 and A-210." evidence="10">
    <original>R</original>
    <variation>A</variation>
    <location>
        <position position="163"/>
    </location>
</feature>
<feature type="mutagenesis site" description="Strongly reduced ability to ubiquitinate host GBP1." evidence="15">
    <original>R</original>
    <variation>A</variation>
    <location>
        <position position="166"/>
    </location>
</feature>
<feature type="mutagenesis site" description="Abolishes proteasomal degradation of host proteins; when associated with A-163 and A-210." evidence="10">
    <original>F</original>
    <variation>A</variation>
    <location>
        <position position="187"/>
    </location>
</feature>
<feature type="mutagenesis site" description="Decreased ability to ubiquitinate host GBP1; when associated with A-146." evidence="14">
    <original>R</original>
    <variation>A</variation>
    <location>
        <position position="190"/>
    </location>
</feature>
<feature type="mutagenesis site" description="Does not affect autoinhibition in absence of substrate." evidence="15">
    <original>I</original>
    <variation>A</variation>
    <location>
        <position position="196"/>
    </location>
</feature>
<feature type="mutagenesis site" description="Reduced autoinhibition in absence of substrate." evidence="15">
    <original>I</original>
    <variation>D</variation>
    <location>
        <position position="196"/>
    </location>
</feature>
<feature type="mutagenesis site" description="Does not affect autoinhibition in absence of substrate." evidence="15">
    <original>E</original>
    <variation>A</variation>
    <location>
        <position position="198"/>
    </location>
</feature>
<feature type="mutagenesis site" description="Abolishes proteasomal degradation of host proteins; when associated with A-163 and A-187." evidence="10">
    <original>H</original>
    <variation>A</variation>
    <location>
        <position position="210"/>
    </location>
</feature>
<feature type="mutagenesis site" description="Slightly reduced autoinhibition in absence of substrate." evidence="15">
    <original>I</original>
    <variation>D</variation>
    <location>
        <position position="211"/>
    </location>
</feature>
<feature type="mutagenesis site" description="Slightly reduced autoinhibition in absence of substrate." evidence="15">
    <original>L</original>
    <variation>D</variation>
    <location>
        <position position="216"/>
    </location>
</feature>
<feature type="mutagenesis site" description="Does not affect autoinhibition in absence of substrate." evidence="15">
    <original>H</original>
    <variation>A</variation>
    <location>
        <position position="219"/>
    </location>
</feature>
<feature type="mutagenesis site" description="Abolishes E3 ubiquitin ligase activity and proteasomal degradation of host proteins." evidence="6 7 8 10 13 14">
    <original>C</original>
    <variation>A</variation>
    <location>
        <position position="337"/>
    </location>
</feature>
<feature type="mutagenesis site" description="Does not affect E3 ubiquitin ligase activity." evidence="7">
    <original>E</original>
    <variation>A</variation>
    <location>
        <position position="338"/>
    </location>
</feature>
<feature type="mutagenesis site" description="Abolishes E3 ubiquitin ligase activity." evidence="7">
    <original>D</original>
    <variation>A</variation>
    <location>
        <position position="339"/>
    </location>
</feature>
<feature type="mutagenesis site" description="Reduced E3 ubiquitin ligase activity." evidence="7">
    <original>R</original>
    <variation>A</variation>
    <location>
        <position position="340"/>
    </location>
</feature>
<feature type="mutagenesis site" description="Does not affect E3 ubiquitin ligase activity." evidence="7">
    <original>R</original>
    <variation>A</variation>
    <location>
        <position position="387"/>
    </location>
</feature>
<feature type="mutagenesis site" description="Does not affect autoinhibition in absence of substrate." evidence="15">
    <original>F</original>
    <variation>A</variation>
    <location>
        <position position="395"/>
    </location>
</feature>
<feature type="mutagenesis site" description="Reduced autoinhibition in absence of substrate." evidence="15">
    <original>F</original>
    <variation>R</variation>
    <location>
        <position position="395"/>
    </location>
</feature>
<feature type="mutagenesis site" description="Abolishes E3 ubiquitin ligase activity." evidence="7">
    <original>D</original>
    <variation>A</variation>
    <location>
        <position position="397"/>
    </location>
</feature>
<feature type="sequence conflict" description="In Ref. 2; AA sequence." evidence="20" ref="2">
    <location>
        <position position="7"/>
    </location>
</feature>
<feature type="helix" evidence="26">
    <location>
        <begin position="23"/>
        <end position="35"/>
    </location>
</feature>
<feature type="helix" evidence="26">
    <location>
        <begin position="43"/>
        <end position="55"/>
    </location>
</feature>
<feature type="strand" evidence="26">
    <location>
        <begin position="59"/>
        <end position="62"/>
    </location>
</feature>
<feature type="strand" evidence="26">
    <location>
        <begin position="80"/>
        <end position="83"/>
    </location>
</feature>
<feature type="strand" evidence="26">
    <location>
        <begin position="101"/>
        <end position="103"/>
    </location>
</feature>
<feature type="strand" evidence="26">
    <location>
        <begin position="121"/>
        <end position="123"/>
    </location>
</feature>
<feature type="strand" evidence="26">
    <location>
        <begin position="141"/>
        <end position="143"/>
    </location>
</feature>
<feature type="strand" evidence="26">
    <location>
        <begin position="161"/>
        <end position="163"/>
    </location>
</feature>
<feature type="strand" evidence="26">
    <location>
        <begin position="185"/>
        <end position="187"/>
    </location>
</feature>
<feature type="helix" evidence="26">
    <location>
        <begin position="198"/>
        <end position="201"/>
    </location>
</feature>
<feature type="strand" evidence="26">
    <location>
        <begin position="208"/>
        <end position="210"/>
    </location>
</feature>
<feature type="helix" evidence="26">
    <location>
        <begin position="220"/>
        <end position="229"/>
    </location>
</feature>
<feature type="strand" evidence="26">
    <location>
        <begin position="237"/>
        <end position="239"/>
    </location>
</feature>
<feature type="helix" evidence="25">
    <location>
        <begin position="254"/>
        <end position="259"/>
    </location>
</feature>
<feature type="helix" evidence="25">
    <location>
        <begin position="264"/>
        <end position="273"/>
    </location>
</feature>
<feature type="helix" evidence="25">
    <location>
        <begin position="274"/>
        <end position="276"/>
    </location>
</feature>
<feature type="helix" evidence="25">
    <location>
        <begin position="283"/>
        <end position="293"/>
    </location>
</feature>
<feature type="helix" evidence="25">
    <location>
        <begin position="305"/>
        <end position="318"/>
    </location>
</feature>
<feature type="helix" evidence="25">
    <location>
        <begin position="320"/>
        <end position="359"/>
    </location>
</feature>
<feature type="helix" evidence="25">
    <location>
        <begin position="366"/>
        <end position="386"/>
    </location>
</feature>
<feature type="turn" evidence="25">
    <location>
        <begin position="387"/>
        <end position="389"/>
    </location>
</feature>
<feature type="helix" evidence="25">
    <location>
        <begin position="400"/>
        <end position="408"/>
    </location>
</feature>
<feature type="turn" evidence="25">
    <location>
        <begin position="409"/>
        <end position="414"/>
    </location>
</feature>
<feature type="helix" evidence="25">
    <location>
        <begin position="434"/>
        <end position="448"/>
    </location>
</feature>
<feature type="helix" evidence="25">
    <location>
        <begin position="451"/>
        <end position="455"/>
    </location>
</feature>
<feature type="helix" evidence="25">
    <location>
        <begin position="458"/>
        <end position="466"/>
    </location>
</feature>
<feature type="helix" evidence="25">
    <location>
        <begin position="469"/>
        <end position="484"/>
    </location>
</feature>
<feature type="helix" evidence="25">
    <location>
        <begin position="486"/>
        <end position="498"/>
    </location>
</feature>
<feature type="helix" evidence="25">
    <location>
        <begin position="504"/>
        <end position="530"/>
    </location>
</feature>
<protein>
    <recommendedName>
        <fullName evidence="20">E3 ubiquitin-protein ligase ipaH9.8</fullName>
        <ecNumber evidence="6 7 14 15">2.3.2.27</ecNumber>
    </recommendedName>
    <alternativeName>
        <fullName evidence="19">Invasion plasmid antigen 9.8</fullName>
    </alternativeName>
</protein>
<accession>Q8VSC3</accession>
<accession>O85159</accession>
<accession>Q2TH74</accession>
<accession>Q6XVV1</accession>
<accession>Q9AFM5</accession>
<accession>Q9AJV1</accession>
<organism>
    <name type="scientific">Shigella flexneri</name>
    <dbReference type="NCBI Taxonomy" id="623"/>
    <lineage>
        <taxon>Bacteria</taxon>
        <taxon>Pseudomonadati</taxon>
        <taxon>Pseudomonadota</taxon>
        <taxon>Gammaproteobacteria</taxon>
        <taxon>Enterobacterales</taxon>
        <taxon>Enterobacteriaceae</taxon>
        <taxon>Shigella</taxon>
    </lineage>
</organism>
<comment type="function">
    <text evidence="5 6 7 8 9 10 12 13 14 15 16">Effector E3 ubiquitin ligase that interferes with host's ubiquitination pathway and modulates the acute inflammatory responses, thus facilitating bacterial colonization within the host cell (PubMed:18005683, PubMed:18997778, PubMed:20831869, PubMed:24248594, PubMed:29024643, PubMed:29144452, PubMed:31216343, PubMed:33303953). Interacts with IKBKG (NEMO) and TNIP1 (ABIN-1), a ubiquitin-binding adapter protein, which results in TNIP1-dependent 'Lys-27'-linked polyubiquitination of IKBKG (PubMed:18005683). Consequently, polyubiquitinated IKBKG undergoes proteasome-dependent degradation, which perturbs NF-kappa-B activation during bacterial infection (PubMed:18005683, PubMed:20010814). Mediates polyubiquitination of host U2AF1, leading to its proteasomal degradation (PubMed:15950937). Catalyzes 'Lys-48'-linked polyubiquitination and subsequent degradation of a subset of host guanylate-binding proteins (GBP1, GBP2, GBP4 and GBP6), thereby suppressing host cell defense (PubMed:29024643, PubMed:29144452, PubMed:31216343, PubMed:33303953, PubMed:37014865). In contrast, host GBP3 and GBP7 are not ubiquitinated by IpaH9.8 (PubMed:29024643, PubMed:29144452, PubMed:31216343). Uses UBE2D2 (UBCH5B) as an E2 ubiquitin-conjugating enzyme (PubMed:18005683).</text>
</comment>
<comment type="catalytic activity">
    <reaction evidence="6 7 14 15">
        <text>S-ubiquitinyl-[E2 ubiquitin-conjugating enzyme]-L-cysteine + [acceptor protein]-L-lysine = [E2 ubiquitin-conjugating enzyme]-L-cysteine + N(6)-ubiquitinyl-[acceptor protein]-L-lysine.</text>
        <dbReference type="EC" id="2.3.2.27"/>
    </reaction>
</comment>
<comment type="activity regulation">
    <text evidence="9 14 15">Exists in an autoinhibited state in the absence of substrate protein, due to interactions of the leucine-rich repeats with NEL domain (PubMed:20831869, PubMed:31216343, PubMed:33303953). Is activated upon binding to a substrate protein (PubMed:20831869, PubMed:31216343, PubMed:33303953).</text>
</comment>
<comment type="pathway">
    <text evidence="6 7 14 15">Protein modification; protein ubiquitination.</text>
</comment>
<comment type="subunit">
    <text evidence="5 9">Also interacts with human and mouse U2AF1 (U2AF35).</text>
</comment>
<comment type="interaction">
    <interactant intactId="EBI-6125799">
        <id>Q8VSC3</id>
    </interactant>
    <interactant intactId="EBI-6125799">
        <id>Q8VSC3</id>
        <label>ipaH9.8</label>
    </interactant>
    <organismsDiffer>false</organismsDiffer>
    <experiments>3</experiments>
</comment>
<comment type="interaction">
    <interactant intactId="EBI-6125799">
        <id>Q8VSC3</id>
    </interactant>
    <interactant intactId="EBI-81279">
        <id>Q9Y6K9</id>
        <label>IKBKG</label>
    </interactant>
    <organismsDiffer>true</organismsDiffer>
    <experiments>8</experiments>
</comment>
<comment type="interaction">
    <interactant intactId="EBI-6125799">
        <id>Q8VSC3</id>
    </interactant>
    <interactant intactId="EBI-357849">
        <id>Q15025</id>
        <label>TNIP1</label>
    </interactant>
    <organismsDiffer>true</organismsDiffer>
    <experiments>4</experiments>
</comment>
<comment type="subcellular location">
    <subcellularLocation>
        <location evidence="3">Secreted</location>
    </subcellularLocation>
    <subcellularLocation>
        <location evidence="4 13">Host cytoplasm</location>
    </subcellularLocation>
    <subcellularLocation>
        <location evidence="4">Host nucleus</location>
    </subcellularLocation>
    <text evidence="3 4">Secreted via Mxi-Spa type III secretion system (T3SS), and delivered into the host cytoplasm (PubMed:11115111, PubMed:11418613). Transported into the host nucleus (PubMed:11418613). This transport is independent of cytosolic factors, but dependent on temperature and partly on ATP/GTP (PubMed:11418613).</text>
</comment>
<comment type="induction">
    <text evidence="17">Induced upon entry into host epithelial cells.</text>
</comment>
<comment type="domain">
    <text evidence="11 14">The LRR (leucine-rich repeat) repeats are involved in substrate recognition with target proteins.</text>
</comment>
<comment type="PTM">
    <text evidence="9">Autoubiquitinated (in vitro) (PubMed:20831869). Ubiquitinated in the presence of host E1 ubiquitin-activating enzyme, E2 ubiquitin-conjugating enzyme and ubiquitin (PubMed:20831869).</text>
</comment>
<comment type="disruption phenotype">
    <text evidence="5">In murine lung infection model, mutants cause severe inflammatory responses, with increased pro-inflammatory cytokine production levels. Colonization is greatly reduced.</text>
</comment>
<comment type="similarity">
    <text evidence="2 20">Belongs to the LRR-containing bacterial E3 ligase family.</text>
</comment>
<comment type="sequence caution" evidence="20">
    <conflict type="erroneous initiation">
        <sequence resource="EMBL-CDS" id="AAK18544"/>
    </conflict>
    <text>Extended N-terminus.</text>
</comment>
<comment type="sequence caution" evidence="20">
    <conflict type="erroneous initiation">
        <sequence resource="EMBL-CDS" id="AAW64849"/>
    </conflict>
    <text>Extended N-terminus.</text>
</comment>
<proteinExistence type="evidence at protein level"/>
<reference key="1">
    <citation type="journal article" date="1998" name="EMBO J.">
        <title>Induction of type III secretion in Shigella flexneri is associated with differential control of transcription of genes encoding secreted proteins.</title>
        <authorList>
            <person name="Demers B."/>
            <person name="Sansonetti P.J."/>
            <person name="Parsot C."/>
        </authorList>
    </citation>
    <scope>NUCLEOTIDE SEQUENCE [GENOMIC DNA]</scope>
    <scope>PROTEIN SEQUENCE OF 1-12 AND 480-494</scope>
    <scope>INDUCTION</scope>
    <source>
        <strain>M90T / Serotype 5a</strain>
        <plasmid>pWR100</plasmid>
    </source>
</reference>
<reference key="2">
    <citation type="journal article" date="2000" name="Mol. Microbiol.">
        <title>The virulence plasmid pWR100 and the repertoire of proteins secreted by the type III secretion apparatus of Shigella flexneri.</title>
        <authorList>
            <person name="Buchrieser C."/>
            <person name="Glaser P."/>
            <person name="Rusniok C."/>
            <person name="Nedjari H."/>
            <person name="d'Hauteville H."/>
            <person name="Kunst F."/>
            <person name="Sansonetti P.J."/>
            <person name="Parsot C."/>
        </authorList>
    </citation>
    <scope>NUCLEOTIDE SEQUENCE [GENOMIC DNA]</scope>
    <scope>PROTEIN SEQUENCE OF 1-9</scope>
    <scope>SUBCELLULAR LOCATION</scope>
    <source>
        <strain>M90T / Serotype 5a</strain>
        <plasmid>pWR100</plasmid>
    </source>
</reference>
<reference key="3">
    <citation type="journal article" date="2001" name="Infect. Immun.">
        <title>Complete DNA sequence and analysis of the large virulence plasmid of Shigella flexneri.</title>
        <authorList>
            <person name="Venkatesan M.M."/>
            <person name="Goldberg M.B."/>
            <person name="Rose D.J."/>
            <person name="Grotbeck E.J."/>
            <person name="Burland V."/>
            <person name="Blattner F.R."/>
        </authorList>
    </citation>
    <scope>NUCLEOTIDE SEQUENCE [GENOMIC DNA]</scope>
    <source>
        <strain>M90T / Serotype 5a</strain>
        <plasmid>pWR501</plasmid>
    </source>
</reference>
<reference key="4">
    <citation type="journal article" date="2003" name="Infect. Immun.">
        <title>Comparison of two major forms of the Shigella virulence plasmid pINV: positive selection is a major force driving the divergence.</title>
        <authorList>
            <person name="Lan R."/>
            <person name="Stevenson G."/>
            <person name="Reeves P.R."/>
        </authorList>
    </citation>
    <scope>NUCLEOTIDE SEQUENCE [GENOMIC DNA]</scope>
    <source>
        <strain>M1382 / Serotype 6</strain>
        <plasmid>pINV_F6_M1382</plasmid>
    </source>
</reference>
<reference key="5">
    <citation type="journal article" date="2006" name="Sci. China, Ser. C, Life Sci.">
        <title>Comparison of the virulence plasmid genomes of two strains of Shigella which lost the ability to bind Congo red.</title>
        <authorList>
            <person name="Xiong Z."/>
            <person name="Tang X."/>
            <person name="Yang F."/>
            <person name="Zhang X."/>
            <person name="Yang J."/>
            <person name="Chen L."/>
            <person name="Nie H."/>
            <person name="Yan Y."/>
            <person name="Jiang Y."/>
            <person name="Wang J."/>
            <person name="Xue Y."/>
            <person name="Xu X."/>
            <person name="Zhu Y."/>
            <person name="Dong J."/>
            <person name="An L."/>
            <person name="Wang X."/>
            <person name="Jin Q."/>
        </authorList>
    </citation>
    <scope>NUCLEOTIDE SEQUENCE [GENOMIC DNA]</scope>
    <source>
        <strain>Serotype 5</strain>
        <plasmid>pSF5</plasmid>
    </source>
</reference>
<reference key="6">
    <citation type="journal article" date="2002" name="Nucleic Acids Res.">
        <title>Genome sequence of Shigella flexneri 2a: insights into pathogenicity through comparison with genomes of Escherichia coli K12 and O157.</title>
        <authorList>
            <person name="Jin Q."/>
            <person name="Yuan Z."/>
            <person name="Xu J."/>
            <person name="Wang Y."/>
            <person name="Shen Y."/>
            <person name="Lu W."/>
            <person name="Wang J."/>
            <person name="Liu H."/>
            <person name="Yang J."/>
            <person name="Yang F."/>
            <person name="Zhang X."/>
            <person name="Zhang J."/>
            <person name="Yang G."/>
            <person name="Wu H."/>
            <person name="Qu D."/>
            <person name="Dong J."/>
            <person name="Sun L."/>
            <person name="Xue Y."/>
            <person name="Zhao A."/>
            <person name="Gao Y."/>
            <person name="Zhu J."/>
            <person name="Kan B."/>
            <person name="Ding K."/>
            <person name="Chen S."/>
            <person name="Cheng H."/>
            <person name="Yao Z."/>
            <person name="He B."/>
            <person name="Chen R."/>
            <person name="Ma D."/>
            <person name="Qiang B."/>
            <person name="Wen Y."/>
            <person name="Hou Y."/>
            <person name="Yu J."/>
        </authorList>
    </citation>
    <scope>NUCLEOTIDE SEQUENCE [LARGE SCALE GENOMIC DNA]</scope>
    <source>
        <strain>301 / Serotype 2a</strain>
        <plasmid>pCP301</plasmid>
    </source>
</reference>
<reference key="7">
    <citation type="journal article" date="2001" name="J. Biol. Chem.">
        <title>Shigella protein IpaH(9.8) is secreted from bacteria within mammalian cells and transported to the nucleus.</title>
        <authorList>
            <person name="Toyotome T."/>
            <person name="Suzuki T."/>
            <person name="Kuwae A."/>
            <person name="Nonaka T."/>
            <person name="Fukuda H."/>
            <person name="Imajoh-Ohmi S."/>
            <person name="Toyofuku T."/>
            <person name="Hori M."/>
            <person name="Sasakawa C."/>
        </authorList>
    </citation>
    <scope>SUBCELLULAR LOCATION</scope>
    <scope>SECRETION VIA TYPE III SECRETION SYSTEM</scope>
    <source>
        <strain>YSH6000 / Serotype 2a</strain>
    </source>
</reference>
<reference key="8">
    <citation type="journal article" date="2005" name="Biochem. Biophys. Res. Commun.">
        <title>Shigella effector IpaH9.8 binds to a splicing factor U2AF(35) to modulate host immune responses.</title>
        <authorList>
            <person name="Okuda J."/>
            <person name="Toyotome T."/>
            <person name="Kataoka N."/>
            <person name="Ohno M."/>
            <person name="Abe H."/>
            <person name="Shimura Y."/>
            <person name="Seyedarabi A."/>
            <person name="Pickersgill R."/>
            <person name="Sasakawa C."/>
        </authorList>
    </citation>
    <scope>FUNCTION</scope>
    <scope>DISRUPTION PHENOTYPE</scope>
    <scope>INTERACTION WITH MURINE U2AF1</scope>
    <source>
        <strain>YSH6000 / Serotype 2a</strain>
    </source>
</reference>
<reference key="9">
    <citation type="journal article" date="2007" name="Cell Host Microbe">
        <title>Type III secretion effectors of the IpaH family are E3 ubiquitin ligases.</title>
        <authorList>
            <person name="Rohde J.R."/>
            <person name="Breitkreutz A."/>
            <person name="Chenal A."/>
            <person name="Sansonetti P.J."/>
            <person name="Parsot C."/>
        </authorList>
    </citation>
    <scope>FUNCTION AS A LIGASE</scope>
    <scope>PATHWAY</scope>
    <scope>CATALYTIC ACTIVITY</scope>
    <scope>MUTAGENESIS OF CYS-337</scope>
</reference>
<reference key="10">
    <citation type="journal article" date="2008" name="Nat. Struct. Mol. Biol.">
        <title>Structure of the Shigella T3SS effector IpaH defines a new class of E3 ubiquitin ligases.</title>
        <authorList>
            <person name="Singer A.U."/>
            <person name="Rohde J.R."/>
            <person name="Lam R."/>
            <person name="Skarina T."/>
            <person name="Kagan O."/>
            <person name="Dileo R."/>
            <person name="Chirgadze N.Y."/>
            <person name="Cuff M.E."/>
            <person name="Joachimiak A."/>
            <person name="Tyers M."/>
            <person name="Sansonetti P.J."/>
            <person name="Parsot C."/>
            <person name="Savchenko A."/>
        </authorList>
    </citation>
    <scope>FUNCTION</scope>
    <scope>PATHWAY</scope>
    <scope>CATALYTIC ACTIVITY</scope>
    <scope>MUTAGENESIS OF CYS-337; GLU-338; ASP-339; ARG-340; ARG-387 AND ASP-397</scope>
</reference>
<reference key="11">
    <citation type="journal article" date="2010" name="Nat. Cell Biol.">
        <title>A bacterial E3 ubiquitin ligase IpaH9.8 targets NEMO/IKKgamma to dampen the host NF-kappaB-mediated inflammatory response.</title>
        <authorList>
            <person name="Ashida H."/>
            <person name="Kim M."/>
            <person name="Schmidt-Supprian M."/>
            <person name="Ma A."/>
            <person name="Ogawa M."/>
            <person name="Sasakawa C."/>
        </authorList>
    </citation>
    <scope>FUNCTION</scope>
    <scope>MUTAGENESIS OF CYS-337</scope>
    <source>
        <strain>YSH6000 / Serotype 2a</strain>
    </source>
</reference>
<reference key="12">
    <citation type="journal article" date="2014" name="Mol. Cell. Biol.">
        <title>Structure of an SspH1-PKN1 complex reveals the basis for host substrate recognition and mechanism of activation for a bacterial E3 ubiquitin ligase.</title>
        <authorList>
            <person name="Keszei A.F."/>
            <person name="Tang X."/>
            <person name="McCormick C."/>
            <person name="Zeqiraj E."/>
            <person name="Rohde J.R."/>
            <person name="Tyers M."/>
            <person name="Sicheri F."/>
        </authorList>
    </citation>
    <scope>MUTAGENESIS OF ARG-163; PHE-187; HIS-210 AND CYS-337</scope>
    <scope>ACTIVE SITE</scope>
    <scope>FUNCTION</scope>
    <source>
        <strain>M90T / Serotype 5a</strain>
        <plasmid>pWR100</plasmid>
    </source>
</reference>
<reference key="13">
    <citation type="journal article" date="2017" name="Cell Host Microbe">
        <title>GBPs inhibit motility of Shigella flexneri but are targeted for degradation by the bacterial ubiquitin ligase IpaH9.8.</title>
        <authorList>
            <person name="Wandel M.P."/>
            <person name="Pathe C."/>
            <person name="Werner E.I."/>
            <person name="Ellison C.J."/>
            <person name="Boyle K.B."/>
            <person name="von der Malsburg A."/>
            <person name="Rohde J."/>
            <person name="Randow F."/>
        </authorList>
    </citation>
    <scope>FUNCTION</scope>
    <scope>CATALYTIC ACTIVITY</scope>
</reference>
<reference key="14">
    <citation type="journal article" date="2017" name="Nature">
        <title>Ubiquitination and degradation of GBPs by a Shigella effector to suppress host defence.</title>
        <authorList>
            <person name="Li P."/>
            <person name="Jiang W."/>
            <person name="Yu Q."/>
            <person name="Liu W."/>
            <person name="Zhou P."/>
            <person name="Li J."/>
            <person name="Xu J."/>
            <person name="Xu B."/>
            <person name="Wang F."/>
            <person name="Shao F."/>
        </authorList>
    </citation>
    <scope>FUNCTION</scope>
    <scope>SUBCELLULAR LOCATION</scope>
    <scope>CATALYTIC ACTIVITY</scope>
    <scope>ACTIVE SITE</scope>
    <scope>MUTAGENESIS OF LEU-50; ARG-62; ASN-83 AND CYS-337</scope>
</reference>
<reference key="15">
    <citation type="journal article" date="2023" name="Proc. Natl. Acad. Sci. U.S.A.">
        <title>Shigella IpaH9.8 limits GBP1-dependent LPS release from intracytosolic bacteria to suppress caspase-4 activation.</title>
        <authorList>
            <person name="Goers L."/>
            <person name="Kim K."/>
            <person name="Stedman T.C."/>
            <person name="Canning P.J."/>
            <person name="Mou X."/>
            <person name="Ernst N.H."/>
            <person name="Coers J."/>
            <person name="Lesser C.F."/>
        </authorList>
    </citation>
    <scope>FUNCTION</scope>
</reference>
<reference key="16">
    <citation type="journal article" date="2010" name="FEBS Lett.">
        <title>A disulfide driven domain swap switches off the activity of Shigella IpaH9.8 E3 ligase.</title>
        <authorList>
            <person name="Seyedarabi A."/>
            <person name="Sullivan J.A."/>
            <person name="Sasakawa C."/>
            <person name="Pickersgill R.W."/>
        </authorList>
    </citation>
    <scope>X-RAY CRYSTALLOGRAPHY (3.20 ANGSTROMS) OF 254-545</scope>
    <scope>FUNCTION</scope>
    <scope>INTERACTION WITH HUMAN U2AF1</scope>
    <scope>AUTOUBIQUITINATION</scope>
    <scope>ACTIVITY REGULATION</scope>
    <source>
        <strain>YSH6000 / Serotype 2a</strain>
    </source>
</reference>
<reference evidence="21 22" key="17">
    <citation type="journal article" date="2016" name="Acta Crystallogr. F">
        <title>Crystal structure of the substrate-recognition domain of the Shigella E3 ligase IpaH9.8.</title>
        <authorList>
            <person name="Takagi K."/>
            <person name="Kim M."/>
            <person name="Sasakawa C."/>
            <person name="Mizushima T."/>
        </authorList>
    </citation>
    <scope>X-RAY CRYSTALLOGRAPHY (1.80 ANGSTROMS) OF 22-244</scope>
    <scope>DOMAIN</scope>
</reference>
<reference evidence="23" key="18">
    <citation type="journal article" date="2019" name="PLoS Pathog.">
        <title>Structural mechanism for guanylate-binding proteins (GBPs) targeting by the Shigella E3 ligase IpaH9.8.</title>
        <authorList>
            <person name="Ji C."/>
            <person name="Du S."/>
            <person name="Li P."/>
            <person name="Zhu Q."/>
            <person name="Yang X."/>
            <person name="Long C."/>
            <person name="Yu J."/>
            <person name="Shao F."/>
            <person name="Xiao J."/>
        </authorList>
    </citation>
    <scope>X-RAY CRYSTALLOGRAPHY (3.60 ANGSTROMS) OF 22-252 IN COMPLEX WITH HOST GBP1</scope>
    <scope>FUNCTION</scope>
    <scope>PATHWAY</scope>
    <scope>CATALYTIC ACTIVITY</scope>
    <scope>ACTIVITY REGULATION</scope>
    <scope>MUTAGENESIS OF 86-TYR--GLN-88; HIS-126; TYR-146; ARG-190 AND CYS-337</scope>
</reference>
<reference evidence="24" key="19">
    <citation type="journal article" date="2020" name="Commun. Biol.">
        <title>Substrate-binding destabilizes the hydrophobic cluster to relieve the autoinhibition of bacterial ubiquitin ligase IpaH9.8.</title>
        <authorList>
            <person name="Ye Y."/>
            <person name="Xiong Y."/>
            <person name="Huang H."/>
        </authorList>
    </citation>
    <scope>X-RAY CRYSTALLOGRAPHY (3.72 ANGSTROMS) IN COMPLEX WITH HOST GBP1</scope>
    <scope>FUNCTION</scope>
    <scope>PATHWAY</scope>
    <scope>CATALYTIC ACTIVITY</scope>
    <scope>ACTIVITY REGULATION</scope>
    <scope>DOMAIN</scope>
    <scope>MUTAGENESIS OF ARG-166; ILE-196; GLU-198; ILE-211; LEU-216; HIS-219 AND PHE-395</scope>
</reference>
<evidence type="ECO:0000250" key="1">
    <source>
        <dbReference type="UniProtKB" id="P0CE12"/>
    </source>
</evidence>
<evidence type="ECO:0000255" key="2">
    <source>
        <dbReference type="PROSITE-ProRule" id="PRU01398"/>
    </source>
</evidence>
<evidence type="ECO:0000269" key="3">
    <source>
    </source>
</evidence>
<evidence type="ECO:0000269" key="4">
    <source>
    </source>
</evidence>
<evidence type="ECO:0000269" key="5">
    <source>
    </source>
</evidence>
<evidence type="ECO:0000269" key="6">
    <source>
    </source>
</evidence>
<evidence type="ECO:0000269" key="7">
    <source>
    </source>
</evidence>
<evidence type="ECO:0000269" key="8">
    <source>
    </source>
</evidence>
<evidence type="ECO:0000269" key="9">
    <source>
    </source>
</evidence>
<evidence type="ECO:0000269" key="10">
    <source>
    </source>
</evidence>
<evidence type="ECO:0000269" key="11">
    <source>
    </source>
</evidence>
<evidence type="ECO:0000269" key="12">
    <source>
    </source>
</evidence>
<evidence type="ECO:0000269" key="13">
    <source>
    </source>
</evidence>
<evidence type="ECO:0000269" key="14">
    <source>
    </source>
</evidence>
<evidence type="ECO:0000269" key="15">
    <source>
    </source>
</evidence>
<evidence type="ECO:0000269" key="16">
    <source>
    </source>
</evidence>
<evidence type="ECO:0000269" key="17">
    <source>
    </source>
</evidence>
<evidence type="ECO:0000303" key="18">
    <source>
    </source>
</evidence>
<evidence type="ECO:0000303" key="19">
    <source>
    </source>
</evidence>
<evidence type="ECO:0000305" key="20"/>
<evidence type="ECO:0007744" key="21">
    <source>
        <dbReference type="PDB" id="5B0N"/>
    </source>
</evidence>
<evidence type="ECO:0007744" key="22">
    <source>
        <dbReference type="PDB" id="5B0T"/>
    </source>
</evidence>
<evidence type="ECO:0007744" key="23">
    <source>
        <dbReference type="PDB" id="6K2D"/>
    </source>
</evidence>
<evidence type="ECO:0007744" key="24">
    <source>
        <dbReference type="PDB" id="6LOJ"/>
    </source>
</evidence>
<evidence type="ECO:0007829" key="25">
    <source>
        <dbReference type="PDB" id="3L3P"/>
    </source>
</evidence>
<evidence type="ECO:0007829" key="26">
    <source>
        <dbReference type="PDB" id="5B0N"/>
    </source>
</evidence>
<name>IPA9_SHIFL</name>